<accession>Q8NZU7</accession>
<dbReference type="EMBL" id="AE009949">
    <property type="protein sequence ID" value="AAL98258.1"/>
    <property type="molecule type" value="Genomic_DNA"/>
</dbReference>
<dbReference type="RefSeq" id="WP_011018100.1">
    <property type="nucleotide sequence ID" value="NC_003485.1"/>
</dbReference>
<dbReference type="SMR" id="Q8NZU7"/>
<dbReference type="KEGG" id="spm:spyM18_1729"/>
<dbReference type="HOGENOM" id="CLU_006301_5_0_9"/>
<dbReference type="GO" id="GO:0005829">
    <property type="term" value="C:cytosol"/>
    <property type="evidence" value="ECO:0007669"/>
    <property type="project" value="TreeGrafter"/>
</dbReference>
<dbReference type="GO" id="GO:0005525">
    <property type="term" value="F:GTP binding"/>
    <property type="evidence" value="ECO:0007669"/>
    <property type="project" value="UniProtKB-KW"/>
</dbReference>
<dbReference type="GO" id="GO:0003924">
    <property type="term" value="F:GTPase activity"/>
    <property type="evidence" value="ECO:0007669"/>
    <property type="project" value="UniProtKB-UniRule"/>
</dbReference>
<dbReference type="GO" id="GO:0003743">
    <property type="term" value="F:translation initiation factor activity"/>
    <property type="evidence" value="ECO:0007669"/>
    <property type="project" value="UniProtKB-UniRule"/>
</dbReference>
<dbReference type="CDD" id="cd01887">
    <property type="entry name" value="IF2_eIF5B"/>
    <property type="match status" value="1"/>
</dbReference>
<dbReference type="CDD" id="cd03702">
    <property type="entry name" value="IF2_mtIF2_II"/>
    <property type="match status" value="1"/>
</dbReference>
<dbReference type="CDD" id="cd03692">
    <property type="entry name" value="mtIF2_IVc"/>
    <property type="match status" value="1"/>
</dbReference>
<dbReference type="FunFam" id="2.40.30.10:FF:000007">
    <property type="entry name" value="Translation initiation factor IF-2"/>
    <property type="match status" value="1"/>
</dbReference>
<dbReference type="FunFam" id="2.40.30.10:FF:000008">
    <property type="entry name" value="Translation initiation factor IF-2"/>
    <property type="match status" value="1"/>
</dbReference>
<dbReference type="FunFam" id="3.40.50.10050:FF:000001">
    <property type="entry name" value="Translation initiation factor IF-2"/>
    <property type="match status" value="1"/>
</dbReference>
<dbReference type="FunFam" id="3.40.50.300:FF:000019">
    <property type="entry name" value="Translation initiation factor IF-2"/>
    <property type="match status" value="1"/>
</dbReference>
<dbReference type="Gene3D" id="1.10.10.2480">
    <property type="match status" value="1"/>
</dbReference>
<dbReference type="Gene3D" id="3.40.50.300">
    <property type="entry name" value="P-loop containing nucleotide triphosphate hydrolases"/>
    <property type="match status" value="1"/>
</dbReference>
<dbReference type="Gene3D" id="2.40.30.10">
    <property type="entry name" value="Translation factors"/>
    <property type="match status" value="2"/>
</dbReference>
<dbReference type="Gene3D" id="3.40.50.10050">
    <property type="entry name" value="Translation initiation factor IF- 2, domain 3"/>
    <property type="match status" value="1"/>
</dbReference>
<dbReference type="HAMAP" id="MF_00100_B">
    <property type="entry name" value="IF_2_B"/>
    <property type="match status" value="1"/>
</dbReference>
<dbReference type="InterPro" id="IPR053905">
    <property type="entry name" value="EF-G-like_DII"/>
</dbReference>
<dbReference type="InterPro" id="IPR044145">
    <property type="entry name" value="IF2_II"/>
</dbReference>
<dbReference type="InterPro" id="IPR006847">
    <property type="entry name" value="IF2_N"/>
</dbReference>
<dbReference type="InterPro" id="IPR027417">
    <property type="entry name" value="P-loop_NTPase"/>
</dbReference>
<dbReference type="InterPro" id="IPR005225">
    <property type="entry name" value="Small_GTP-bd"/>
</dbReference>
<dbReference type="InterPro" id="IPR000795">
    <property type="entry name" value="T_Tr_GTP-bd_dom"/>
</dbReference>
<dbReference type="InterPro" id="IPR000178">
    <property type="entry name" value="TF_IF2_bacterial-like"/>
</dbReference>
<dbReference type="InterPro" id="IPR015760">
    <property type="entry name" value="TIF_IF2"/>
</dbReference>
<dbReference type="InterPro" id="IPR023115">
    <property type="entry name" value="TIF_IF2_dom3"/>
</dbReference>
<dbReference type="InterPro" id="IPR036925">
    <property type="entry name" value="TIF_IF2_dom3_sf"/>
</dbReference>
<dbReference type="InterPro" id="IPR009000">
    <property type="entry name" value="Transl_B-barrel_sf"/>
</dbReference>
<dbReference type="NCBIfam" id="TIGR00487">
    <property type="entry name" value="IF-2"/>
    <property type="match status" value="1"/>
</dbReference>
<dbReference type="NCBIfam" id="TIGR00231">
    <property type="entry name" value="small_GTP"/>
    <property type="match status" value="1"/>
</dbReference>
<dbReference type="PANTHER" id="PTHR43381:SF5">
    <property type="entry name" value="TR-TYPE G DOMAIN-CONTAINING PROTEIN"/>
    <property type="match status" value="1"/>
</dbReference>
<dbReference type="PANTHER" id="PTHR43381">
    <property type="entry name" value="TRANSLATION INITIATION FACTOR IF-2-RELATED"/>
    <property type="match status" value="1"/>
</dbReference>
<dbReference type="Pfam" id="PF22042">
    <property type="entry name" value="EF-G_D2"/>
    <property type="match status" value="1"/>
</dbReference>
<dbReference type="Pfam" id="PF00009">
    <property type="entry name" value="GTP_EFTU"/>
    <property type="match status" value="1"/>
</dbReference>
<dbReference type="Pfam" id="PF11987">
    <property type="entry name" value="IF-2"/>
    <property type="match status" value="1"/>
</dbReference>
<dbReference type="Pfam" id="PF04760">
    <property type="entry name" value="IF2_N"/>
    <property type="match status" value="2"/>
</dbReference>
<dbReference type="PRINTS" id="PR00449">
    <property type="entry name" value="RASTRNSFRMNG"/>
</dbReference>
<dbReference type="SUPFAM" id="SSF52156">
    <property type="entry name" value="Initiation factor IF2/eIF5b, domain 3"/>
    <property type="match status" value="1"/>
</dbReference>
<dbReference type="SUPFAM" id="SSF52540">
    <property type="entry name" value="P-loop containing nucleoside triphosphate hydrolases"/>
    <property type="match status" value="1"/>
</dbReference>
<dbReference type="SUPFAM" id="SSF50447">
    <property type="entry name" value="Translation proteins"/>
    <property type="match status" value="2"/>
</dbReference>
<dbReference type="PROSITE" id="PS51722">
    <property type="entry name" value="G_TR_2"/>
    <property type="match status" value="1"/>
</dbReference>
<dbReference type="PROSITE" id="PS01176">
    <property type="entry name" value="IF2"/>
    <property type="match status" value="1"/>
</dbReference>
<evidence type="ECO:0000250" key="1"/>
<evidence type="ECO:0000255" key="2">
    <source>
        <dbReference type="HAMAP-Rule" id="MF_00100"/>
    </source>
</evidence>
<evidence type="ECO:0000256" key="3">
    <source>
        <dbReference type="SAM" id="MobiDB-lite"/>
    </source>
</evidence>
<comment type="function">
    <text evidence="2">One of the essential components for the initiation of protein synthesis. Protects formylmethionyl-tRNA from spontaneous hydrolysis and promotes its binding to the 30S ribosomal subunits. Also involved in the hydrolysis of GTP during the formation of the 70S ribosomal complex.</text>
</comment>
<comment type="subcellular location">
    <subcellularLocation>
        <location evidence="2">Cytoplasm</location>
    </subcellularLocation>
</comment>
<comment type="similarity">
    <text evidence="2">Belongs to the TRAFAC class translation factor GTPase superfamily. Classic translation factor GTPase family. IF-2 subfamily.</text>
</comment>
<proteinExistence type="inferred from homology"/>
<protein>
    <recommendedName>
        <fullName evidence="2">Translation initiation factor IF-2</fullName>
    </recommendedName>
</protein>
<sequence length="953" mass="105464">MSKKRLHEIAKEIGKSSKEVVEHAKYLGLDVKSHASSVEEADAKKIISSFSKASKPDVTASQTVKPKEVAQPSVTVVKETGSEHAEKTQVSKPKSRNFKAEREARAKEQAARKQANGSSHRSQERRGGYRQPNNHQTNEQGDKRITHRSQGDTNDKRIERKASNVSPRHDNHQLVGDRNRSFAKENHKNGRFTNQKKQGRQEPQSKSPKIDFKARAAALKAEQNAEYSRQSETRFRAQQEAKRLAELARQEAKEAALKAQAEEMSHREAALKSIEEAETKLKSSNISAKSTADNRRKKQARPEKNRELTHHSQEGQKKNKKSWNSQNQVRNQKNSNWNKNKKTKKGKNVKNTNTAPKPVTERKFHELPKEFEYTEGMTVAEIAKRIKREPAEIVKKLFMMGVMATQNQSLDGDTIELLMVDYGIEAKAKVEVDDADIERFFEDENYLNPENIVERAPVVTIMGHVDHGKTTLLDTLRNSRVATGEAGGITQHIGAYQIEEAGKKITFLDTPGHAAFTSMRARGASVTDITILIVAADDGVMPQTIEAINHSKAAGVPIIVAINKIDKPGANPERVIAELAEYGIISTAWGGDSEFVEISAKFNKNIDELLETVLLVAEVEELKADPTVRAIGTVIEARLDKGKGAIATLLVQQGTLHVQDPIVVGNTFGRVRAMVNDLGRRVKSAEPSTPVSITGLNETPMAGDHFAVYADEKAARAAGEERSKRALLKQRQNTQRVSLDNLFDTLKAGEIKTVNVIIKADVQGSVEALAASLVKIDVEGVRVNVVHSAVGAINESDVTLAEASNAVIIGFNVRPTPQARQQADTDDVEIRLHSIIYKVIEEVEEAMKGKLDPVYQEKILGEAIIRETFKVSKVGTIGGFMVINGKVTRDSSVRVIRDSVVIFDGKLASLKHYKDDVKEVGNAQEGGLMIENFNDLKVDDTIEAYIMEEIVRK</sequence>
<feature type="chain" id="PRO_0000137268" description="Translation initiation factor IF-2">
    <location>
        <begin position="1"/>
        <end position="953"/>
    </location>
</feature>
<feature type="domain" description="tr-type G">
    <location>
        <begin position="454"/>
        <end position="623"/>
    </location>
</feature>
<feature type="region of interest" description="Disordered" evidence="3">
    <location>
        <begin position="48"/>
        <end position="248"/>
    </location>
</feature>
<feature type="region of interest" description="Disordered" evidence="3">
    <location>
        <begin position="279"/>
        <end position="363"/>
    </location>
</feature>
<feature type="region of interest" description="G1" evidence="1">
    <location>
        <begin position="463"/>
        <end position="470"/>
    </location>
</feature>
<feature type="region of interest" description="G2" evidence="1">
    <location>
        <begin position="488"/>
        <end position="492"/>
    </location>
</feature>
<feature type="region of interest" description="G3" evidence="1">
    <location>
        <begin position="509"/>
        <end position="512"/>
    </location>
</feature>
<feature type="region of interest" description="G4" evidence="1">
    <location>
        <begin position="563"/>
        <end position="566"/>
    </location>
</feature>
<feature type="region of interest" description="G5" evidence="1">
    <location>
        <begin position="599"/>
        <end position="601"/>
    </location>
</feature>
<feature type="compositionally biased region" description="Basic and acidic residues" evidence="3">
    <location>
        <begin position="80"/>
        <end position="89"/>
    </location>
</feature>
<feature type="compositionally biased region" description="Basic and acidic residues" evidence="3">
    <location>
        <begin position="98"/>
        <end position="111"/>
    </location>
</feature>
<feature type="compositionally biased region" description="Basic and acidic residues" evidence="3">
    <location>
        <begin position="140"/>
        <end position="188"/>
    </location>
</feature>
<feature type="compositionally biased region" description="Polar residues" evidence="3">
    <location>
        <begin position="191"/>
        <end position="207"/>
    </location>
</feature>
<feature type="compositionally biased region" description="Basic and acidic residues" evidence="3">
    <location>
        <begin position="229"/>
        <end position="248"/>
    </location>
</feature>
<feature type="compositionally biased region" description="Polar residues" evidence="3">
    <location>
        <begin position="282"/>
        <end position="291"/>
    </location>
</feature>
<feature type="compositionally biased region" description="Basic and acidic residues" evidence="3">
    <location>
        <begin position="300"/>
        <end position="317"/>
    </location>
</feature>
<feature type="compositionally biased region" description="Low complexity" evidence="3">
    <location>
        <begin position="322"/>
        <end position="338"/>
    </location>
</feature>
<feature type="compositionally biased region" description="Basic residues" evidence="3">
    <location>
        <begin position="339"/>
        <end position="348"/>
    </location>
</feature>
<feature type="binding site" evidence="2">
    <location>
        <begin position="463"/>
        <end position="470"/>
    </location>
    <ligand>
        <name>GTP</name>
        <dbReference type="ChEBI" id="CHEBI:37565"/>
    </ligand>
</feature>
<feature type="binding site" evidence="2">
    <location>
        <begin position="509"/>
        <end position="513"/>
    </location>
    <ligand>
        <name>GTP</name>
        <dbReference type="ChEBI" id="CHEBI:37565"/>
    </ligand>
</feature>
<feature type="binding site" evidence="2">
    <location>
        <begin position="563"/>
        <end position="566"/>
    </location>
    <ligand>
        <name>GTP</name>
        <dbReference type="ChEBI" id="CHEBI:37565"/>
    </ligand>
</feature>
<organism>
    <name type="scientific">Streptococcus pyogenes serotype M18 (strain MGAS8232)</name>
    <dbReference type="NCBI Taxonomy" id="186103"/>
    <lineage>
        <taxon>Bacteria</taxon>
        <taxon>Bacillati</taxon>
        <taxon>Bacillota</taxon>
        <taxon>Bacilli</taxon>
        <taxon>Lactobacillales</taxon>
        <taxon>Streptococcaceae</taxon>
        <taxon>Streptococcus</taxon>
    </lineage>
</organism>
<name>IF2_STRP8</name>
<reference key="1">
    <citation type="journal article" date="2002" name="Proc. Natl. Acad. Sci. U.S.A.">
        <title>Genome sequence and comparative microarray analysis of serotype M18 group A Streptococcus strains associated with acute rheumatic fever outbreaks.</title>
        <authorList>
            <person name="Smoot J.C."/>
            <person name="Barbian K.D."/>
            <person name="Van Gompel J.J."/>
            <person name="Smoot L.M."/>
            <person name="Chaussee M.S."/>
            <person name="Sylva G.L."/>
            <person name="Sturdevant D.E."/>
            <person name="Ricklefs S.M."/>
            <person name="Porcella S.F."/>
            <person name="Parkins L.D."/>
            <person name="Beres S.B."/>
            <person name="Campbell D.S."/>
            <person name="Smith T.M."/>
            <person name="Zhang Q."/>
            <person name="Kapur V."/>
            <person name="Daly J.A."/>
            <person name="Veasy L.G."/>
            <person name="Musser J.M."/>
        </authorList>
    </citation>
    <scope>NUCLEOTIDE SEQUENCE [LARGE SCALE GENOMIC DNA]</scope>
    <source>
        <strain>MGAS8232</strain>
    </source>
</reference>
<keyword id="KW-0963">Cytoplasm</keyword>
<keyword id="KW-0342">GTP-binding</keyword>
<keyword id="KW-0396">Initiation factor</keyword>
<keyword id="KW-0547">Nucleotide-binding</keyword>
<keyword id="KW-0648">Protein biosynthesis</keyword>
<gene>
    <name evidence="2" type="primary">infB</name>
    <name type="ordered locus">spyM18_1729</name>
</gene>